<accession>Q8K207</accession>
<organism>
    <name type="scientific">Mus musculus</name>
    <name type="common">Mouse</name>
    <dbReference type="NCBI Taxonomy" id="10090"/>
    <lineage>
        <taxon>Eukaryota</taxon>
        <taxon>Metazoa</taxon>
        <taxon>Chordata</taxon>
        <taxon>Craniata</taxon>
        <taxon>Vertebrata</taxon>
        <taxon>Euteleostomi</taxon>
        <taxon>Mammalia</taxon>
        <taxon>Eutheria</taxon>
        <taxon>Euarchontoglires</taxon>
        <taxon>Glires</taxon>
        <taxon>Rodentia</taxon>
        <taxon>Myomorpha</taxon>
        <taxon>Muroidea</taxon>
        <taxon>Muridae</taxon>
        <taxon>Murinae</taxon>
        <taxon>Mus</taxon>
        <taxon>Mus</taxon>
    </lineage>
</organism>
<name>CA021_MOUSE</name>
<sequence length="121" mass="13882">MGCASAKHVATVQNEEEAQRGKSYQNGDVFGDEYRIKPVEEVKYMKNGAEEEQKIAARNQENLEKSASSNTRLKTNKEIPGLVHQPRANMHISESQQEFFRMLDEKIEKGRDYCSEEEDIT</sequence>
<proteinExistence type="evidence at protein level"/>
<feature type="chain" id="PRO_0000089247" description="Uncharacterized protein C1orf21 homolog">
    <location>
        <begin position="1"/>
        <end position="121"/>
    </location>
</feature>
<feature type="region of interest" description="Disordered" evidence="1">
    <location>
        <begin position="1"/>
        <end position="28"/>
    </location>
</feature>
<feature type="region of interest" description="Disordered" evidence="1">
    <location>
        <begin position="60"/>
        <end position="81"/>
    </location>
</feature>
<feature type="modified residue" description="Phosphoserine" evidence="2 3">
    <location>
        <position position="95"/>
    </location>
</feature>
<feature type="modified residue" description="Phosphoserine" evidence="2 3">
    <location>
        <position position="115"/>
    </location>
</feature>
<reference key="1">
    <citation type="journal article" date="2004" name="Genome Res.">
        <title>The status, quality, and expansion of the NIH full-length cDNA project: the Mammalian Gene Collection (MGC).</title>
        <authorList>
            <consortium name="The MGC Project Team"/>
        </authorList>
    </citation>
    <scope>NUCLEOTIDE SEQUENCE [LARGE SCALE MRNA]</scope>
    <source>
        <strain>FVB/N</strain>
        <tissue>Mammary tumor</tissue>
    </source>
</reference>
<reference key="2">
    <citation type="journal article" date="2007" name="Mol. Cell. Proteomics">
        <title>Qualitative and quantitative analyses of protein phosphorylation in naive and stimulated mouse synaptosomal preparations.</title>
        <authorList>
            <person name="Munton R.P."/>
            <person name="Tweedie-Cullen R."/>
            <person name="Livingstone-Zatchej M."/>
            <person name="Weinandy F."/>
            <person name="Waidelich M."/>
            <person name="Longo D."/>
            <person name="Gehrig P."/>
            <person name="Potthast F."/>
            <person name="Rutishauser D."/>
            <person name="Gerrits B."/>
            <person name="Panse C."/>
            <person name="Schlapbach R."/>
            <person name="Mansuy I.M."/>
        </authorList>
    </citation>
    <scope>IDENTIFICATION BY MASS SPECTROMETRY [LARGE SCALE ANALYSIS]</scope>
    <source>
        <tissue>Brain cortex</tissue>
    </source>
</reference>
<reference key="3">
    <citation type="journal article" date="2009" name="Immunity">
        <title>The phagosomal proteome in interferon-gamma-activated macrophages.</title>
        <authorList>
            <person name="Trost M."/>
            <person name="English L."/>
            <person name="Lemieux S."/>
            <person name="Courcelles M."/>
            <person name="Desjardins M."/>
            <person name="Thibault P."/>
        </authorList>
    </citation>
    <scope>PHOSPHORYLATION [LARGE SCALE ANALYSIS] AT SER-95 AND SER-115</scope>
    <scope>IDENTIFICATION BY MASS SPECTROMETRY [LARGE SCALE ANALYSIS]</scope>
</reference>
<reference key="4">
    <citation type="journal article" date="2010" name="Cell">
        <title>A tissue-specific atlas of mouse protein phosphorylation and expression.</title>
        <authorList>
            <person name="Huttlin E.L."/>
            <person name="Jedrychowski M.P."/>
            <person name="Elias J.E."/>
            <person name="Goswami T."/>
            <person name="Rad R."/>
            <person name="Beausoleil S.A."/>
            <person name="Villen J."/>
            <person name="Haas W."/>
            <person name="Sowa M.E."/>
            <person name="Gygi S.P."/>
        </authorList>
    </citation>
    <scope>PHOSPHORYLATION [LARGE SCALE ANALYSIS] AT SER-95 AND SER-115</scope>
    <scope>IDENTIFICATION BY MASS SPECTROMETRY [LARGE SCALE ANALYSIS]</scope>
    <source>
        <tissue>Brain</tissue>
        <tissue>Brown adipose tissue</tissue>
        <tissue>Heart</tissue>
        <tissue>Kidney</tissue>
        <tissue>Liver</tissue>
        <tissue>Lung</tissue>
        <tissue>Pancreas</tissue>
        <tissue>Spleen</tissue>
        <tissue>Testis</tissue>
    </source>
</reference>
<keyword id="KW-0597">Phosphoprotein</keyword>
<keyword id="KW-1185">Reference proteome</keyword>
<dbReference type="EMBL" id="BC034723">
    <property type="protein sequence ID" value="AAH34723.1"/>
    <property type="molecule type" value="mRNA"/>
</dbReference>
<dbReference type="EMBL" id="BC055912">
    <property type="protein sequence ID" value="AAH55912.1"/>
    <property type="molecule type" value="mRNA"/>
</dbReference>
<dbReference type="CCDS" id="CCDS35737.1"/>
<dbReference type="RefSeq" id="NP_932107.1">
    <property type="nucleotide sequence ID" value="NM_197990.3"/>
</dbReference>
<dbReference type="RefSeq" id="XP_011246371.1">
    <property type="nucleotide sequence ID" value="XM_011248069.4"/>
</dbReference>
<dbReference type="RefSeq" id="XP_030098665.1">
    <property type="nucleotide sequence ID" value="XM_030242805.2"/>
</dbReference>
<dbReference type="RefSeq" id="XP_036009366.1">
    <property type="nucleotide sequence ID" value="XM_036153473.1"/>
</dbReference>
<dbReference type="SMR" id="Q8K207"/>
<dbReference type="BioGRID" id="213415">
    <property type="interactions" value="1"/>
</dbReference>
<dbReference type="FunCoup" id="Q8K207">
    <property type="interactions" value="11"/>
</dbReference>
<dbReference type="STRING" id="10090.ENSMUSP00000036406"/>
<dbReference type="iPTMnet" id="Q8K207"/>
<dbReference type="PhosphoSitePlus" id="Q8K207"/>
<dbReference type="SwissPalm" id="Q8K207"/>
<dbReference type="jPOST" id="Q8K207"/>
<dbReference type="PaxDb" id="10090-ENSMUSP00000036406"/>
<dbReference type="Pumba" id="Q8K207"/>
<dbReference type="Antibodypedia" id="20606">
    <property type="antibodies" value="50 antibodies from 13 providers"/>
</dbReference>
<dbReference type="DNASU" id="69399"/>
<dbReference type="Ensembl" id="ENSMUST00000044581.14">
    <property type="protein sequence ID" value="ENSMUSP00000036406.8"/>
    <property type="gene ID" value="ENSMUSG00000032666.17"/>
</dbReference>
<dbReference type="Ensembl" id="ENSMUST00000187603.7">
    <property type="protein sequence ID" value="ENSMUSP00000140950.2"/>
    <property type="gene ID" value="ENSMUSG00000032666.17"/>
</dbReference>
<dbReference type="GeneID" id="69399"/>
<dbReference type="KEGG" id="mmu:69399"/>
<dbReference type="UCSC" id="uc007cze.2">
    <property type="organism name" value="mouse"/>
</dbReference>
<dbReference type="AGR" id="MGI:1916649"/>
<dbReference type="MGI" id="MGI:1916649">
    <property type="gene designation" value="1700025G04Rik"/>
</dbReference>
<dbReference type="VEuPathDB" id="HostDB:ENSMUSG00000032666"/>
<dbReference type="eggNOG" id="ENOG502RYJP">
    <property type="taxonomic scope" value="Eukaryota"/>
</dbReference>
<dbReference type="GeneTree" id="ENSGT00390000014594"/>
<dbReference type="HOGENOM" id="CLU_136866_0_0_1"/>
<dbReference type="InParanoid" id="Q8K207"/>
<dbReference type="OMA" id="KSNVQHK"/>
<dbReference type="OrthoDB" id="5919401at2759"/>
<dbReference type="PhylomeDB" id="Q8K207"/>
<dbReference type="TreeFam" id="TF333178"/>
<dbReference type="BioGRID-ORCS" id="69399">
    <property type="hits" value="1 hit in 77 CRISPR screens"/>
</dbReference>
<dbReference type="CD-CODE" id="CE726F99">
    <property type="entry name" value="Postsynaptic density"/>
</dbReference>
<dbReference type="PRO" id="PR:Q8K207"/>
<dbReference type="Proteomes" id="UP000000589">
    <property type="component" value="Chromosome 1"/>
</dbReference>
<dbReference type="RNAct" id="Q8K207">
    <property type="molecule type" value="protein"/>
</dbReference>
<dbReference type="Bgee" id="ENSMUSG00000032666">
    <property type="expression patterns" value="Expressed in undifferentiated genital tubercle and 231 other cell types or tissues"/>
</dbReference>
<dbReference type="ExpressionAtlas" id="Q8K207">
    <property type="expression patterns" value="baseline and differential"/>
</dbReference>
<dbReference type="InterPro" id="IPR027967">
    <property type="entry name" value="DUF4612"/>
</dbReference>
<dbReference type="PANTHER" id="PTHR14974">
    <property type="entry name" value="SIMILAR TO RIKEN CDNA 1700025G04 GENE"/>
    <property type="match status" value="1"/>
</dbReference>
<dbReference type="PANTHER" id="PTHR14974:SF3">
    <property type="entry name" value="SIMILAR TO RIKEN CDNA 1700025G04 GENE"/>
    <property type="match status" value="1"/>
</dbReference>
<dbReference type="Pfam" id="PF15389">
    <property type="entry name" value="DUF4612"/>
    <property type="match status" value="1"/>
</dbReference>
<protein>
    <recommendedName>
        <fullName>Uncharacterized protein C1orf21 homolog</fullName>
    </recommendedName>
</protein>
<evidence type="ECO:0000256" key="1">
    <source>
        <dbReference type="SAM" id="MobiDB-lite"/>
    </source>
</evidence>
<evidence type="ECO:0007744" key="2">
    <source>
    </source>
</evidence>
<evidence type="ECO:0007744" key="3">
    <source>
    </source>
</evidence>